<keyword id="KW-0028">Amino-acid biosynthesis</keyword>
<keyword id="KW-0223">Dioxygenase</keyword>
<keyword id="KW-0408">Iron</keyword>
<keyword id="KW-0479">Metal-binding</keyword>
<keyword id="KW-0486">Methionine biosynthesis</keyword>
<keyword id="KW-0533">Nickel</keyword>
<keyword id="KW-0560">Oxidoreductase</keyword>
<comment type="function">
    <text evidence="1">Catalyzes 2 different reactions between oxygen and the acireductone 1,2-dihydroxy-3-keto-5-methylthiopentene (DHK-MTPene) depending upon the metal bound in the active site. Fe-containing acireductone dioxygenase (Fe-ARD) produces formate and 2-keto-4-methylthiobutyrate (KMTB), the alpha-ketoacid precursor of methionine in the methionine recycle pathway. Ni-containing acireductone dioxygenase (Ni-ARD) produces methylthiopropionate, carbon monoxide and formate, and does not lie on the methionine recycle pathway.</text>
</comment>
<comment type="catalytic activity">
    <reaction evidence="1">
        <text>1,2-dihydroxy-5-(methylsulfanyl)pent-1-en-3-one + O2 = 3-(methylsulfanyl)propanoate + CO + formate + 2 H(+)</text>
        <dbReference type="Rhea" id="RHEA:14161"/>
        <dbReference type="ChEBI" id="CHEBI:15378"/>
        <dbReference type="ChEBI" id="CHEBI:15379"/>
        <dbReference type="ChEBI" id="CHEBI:15740"/>
        <dbReference type="ChEBI" id="CHEBI:17245"/>
        <dbReference type="ChEBI" id="CHEBI:49016"/>
        <dbReference type="ChEBI" id="CHEBI:49252"/>
        <dbReference type="EC" id="1.13.11.53"/>
    </reaction>
</comment>
<comment type="catalytic activity">
    <reaction evidence="1">
        <text>1,2-dihydroxy-5-(methylsulfanyl)pent-1-en-3-one + O2 = 4-methylsulfanyl-2-oxobutanoate + formate + 2 H(+)</text>
        <dbReference type="Rhea" id="RHEA:24504"/>
        <dbReference type="ChEBI" id="CHEBI:15378"/>
        <dbReference type="ChEBI" id="CHEBI:15379"/>
        <dbReference type="ChEBI" id="CHEBI:15740"/>
        <dbReference type="ChEBI" id="CHEBI:16723"/>
        <dbReference type="ChEBI" id="CHEBI:49252"/>
        <dbReference type="EC" id="1.13.11.54"/>
    </reaction>
</comment>
<comment type="cofactor">
    <cofactor evidence="1">
        <name>Fe(2+)</name>
        <dbReference type="ChEBI" id="CHEBI:29033"/>
    </cofactor>
    <text evidence="1">Binds 1 Fe(2+) cation per monomer.</text>
</comment>
<comment type="cofactor">
    <cofactor evidence="1">
        <name>Ni(2+)</name>
        <dbReference type="ChEBI" id="CHEBI:49786"/>
    </cofactor>
    <text evidence="1">Binds 1 nickel ion per monomer.</text>
</comment>
<comment type="pathway">
    <text evidence="1">Amino-acid biosynthesis; L-methionine biosynthesis via salvage pathway; L-methionine from S-methyl-5-thio-alpha-D-ribose 1-phosphate: step 5/6.</text>
</comment>
<comment type="subunit">
    <text evidence="1">Monomer.</text>
</comment>
<comment type="similarity">
    <text evidence="1">Belongs to the acireductone dioxygenase (ARD) family.</text>
</comment>
<feature type="chain" id="PRO_0000359218" description="Acireductone dioxygenase">
    <location>
        <begin position="1"/>
        <end position="181"/>
    </location>
</feature>
<feature type="binding site" evidence="1">
    <location>
        <position position="97"/>
    </location>
    <ligand>
        <name>Fe(2+)</name>
        <dbReference type="ChEBI" id="CHEBI:29033"/>
    </ligand>
</feature>
<feature type="binding site" evidence="1">
    <location>
        <position position="97"/>
    </location>
    <ligand>
        <name>Ni(2+)</name>
        <dbReference type="ChEBI" id="CHEBI:49786"/>
    </ligand>
</feature>
<feature type="binding site" evidence="1">
    <location>
        <position position="99"/>
    </location>
    <ligand>
        <name>Fe(2+)</name>
        <dbReference type="ChEBI" id="CHEBI:29033"/>
    </ligand>
</feature>
<feature type="binding site" evidence="1">
    <location>
        <position position="99"/>
    </location>
    <ligand>
        <name>Ni(2+)</name>
        <dbReference type="ChEBI" id="CHEBI:49786"/>
    </ligand>
</feature>
<feature type="binding site" evidence="1">
    <location>
        <position position="103"/>
    </location>
    <ligand>
        <name>Fe(2+)</name>
        <dbReference type="ChEBI" id="CHEBI:29033"/>
    </ligand>
</feature>
<feature type="binding site" evidence="1">
    <location>
        <position position="103"/>
    </location>
    <ligand>
        <name>Ni(2+)</name>
        <dbReference type="ChEBI" id="CHEBI:49786"/>
    </ligand>
</feature>
<feature type="binding site" evidence="1">
    <location>
        <position position="141"/>
    </location>
    <ligand>
        <name>Fe(2+)</name>
        <dbReference type="ChEBI" id="CHEBI:29033"/>
    </ligand>
</feature>
<feature type="binding site" evidence="1">
    <location>
        <position position="141"/>
    </location>
    <ligand>
        <name>Ni(2+)</name>
        <dbReference type="ChEBI" id="CHEBI:49786"/>
    </ligand>
</feature>
<feature type="site" description="May play a role in metal incorporation in vivo" evidence="1">
    <location>
        <position position="96"/>
    </location>
</feature>
<feature type="site" description="May play a role in transmitting local conformational changes" evidence="1">
    <location>
        <position position="102"/>
    </location>
</feature>
<feature type="site" description="Important to generate the dianion" evidence="1">
    <location>
        <position position="105"/>
    </location>
</feature>
<reference key="1">
    <citation type="submission" date="2007-06" db="EMBL/GenBank/DDBJ databases">
        <authorList>
            <person name="Dodson R.J."/>
            <person name="Harkins D."/>
            <person name="Paulsen I.T."/>
        </authorList>
    </citation>
    <scope>NUCLEOTIDE SEQUENCE [LARGE SCALE GENOMIC DNA]</scope>
    <source>
        <strain>DSM 24068 / PA7</strain>
    </source>
</reference>
<protein>
    <recommendedName>
        <fullName evidence="1">Acireductone dioxygenase</fullName>
    </recommendedName>
    <alternativeName>
        <fullName evidence="1">1,2-dihydroxy-3-keto-5-methylthiopentene dioxygenase</fullName>
        <shortName evidence="1">DHK-MTPene dioxygenase</shortName>
    </alternativeName>
    <alternativeName>
        <fullName evidence="1">Acireductone dioxygenase (Fe(2+)-requiring)</fullName>
        <shortName evidence="1">ARD'</shortName>
        <shortName evidence="1">Fe-ARD</shortName>
        <ecNumber evidence="1">1.13.11.54</ecNumber>
    </alternativeName>
    <alternativeName>
        <fullName evidence="1">Acireductone dioxygenase (Ni(2+)-requiring)</fullName>
        <shortName evidence="1">ARD</shortName>
        <shortName evidence="1">Ni-ARD</shortName>
        <ecNumber evidence="1">1.13.11.53</ecNumber>
    </alternativeName>
</protein>
<dbReference type="EC" id="1.13.11.54" evidence="1"/>
<dbReference type="EC" id="1.13.11.53" evidence="1"/>
<dbReference type="EMBL" id="CP000744">
    <property type="protein sequence ID" value="ABR82779.1"/>
    <property type="molecule type" value="Genomic_DNA"/>
</dbReference>
<dbReference type="RefSeq" id="WP_012076229.1">
    <property type="nucleotide sequence ID" value="NC_009656.1"/>
</dbReference>
<dbReference type="SMR" id="A6V7A7"/>
<dbReference type="GeneID" id="77221694"/>
<dbReference type="KEGG" id="pap:PSPA7_3588"/>
<dbReference type="HOGENOM" id="CLU_125400_0_0_6"/>
<dbReference type="UniPathway" id="UPA00904">
    <property type="reaction ID" value="UER00878"/>
</dbReference>
<dbReference type="Proteomes" id="UP000001582">
    <property type="component" value="Chromosome"/>
</dbReference>
<dbReference type="GO" id="GO:0010308">
    <property type="term" value="F:acireductone dioxygenase (Ni2+-requiring) activity"/>
    <property type="evidence" value="ECO:0007669"/>
    <property type="project" value="UniProtKB-UniRule"/>
</dbReference>
<dbReference type="GO" id="GO:0010309">
    <property type="term" value="F:acireductone dioxygenase [iron(II)-requiring] activity"/>
    <property type="evidence" value="ECO:0007669"/>
    <property type="project" value="UniProtKB-UniRule"/>
</dbReference>
<dbReference type="GO" id="GO:0005506">
    <property type="term" value="F:iron ion binding"/>
    <property type="evidence" value="ECO:0007669"/>
    <property type="project" value="UniProtKB-UniRule"/>
</dbReference>
<dbReference type="GO" id="GO:0016151">
    <property type="term" value="F:nickel cation binding"/>
    <property type="evidence" value="ECO:0007669"/>
    <property type="project" value="UniProtKB-UniRule"/>
</dbReference>
<dbReference type="GO" id="GO:0019509">
    <property type="term" value="P:L-methionine salvage from methylthioadenosine"/>
    <property type="evidence" value="ECO:0007669"/>
    <property type="project" value="UniProtKB-UniRule"/>
</dbReference>
<dbReference type="GO" id="GO:0019284">
    <property type="term" value="P:L-methionine salvage from S-adenosylmethionine"/>
    <property type="evidence" value="ECO:0007669"/>
    <property type="project" value="InterPro"/>
</dbReference>
<dbReference type="CDD" id="cd02232">
    <property type="entry name" value="cupin_ARD"/>
    <property type="match status" value="1"/>
</dbReference>
<dbReference type="FunFam" id="2.60.120.10:FF:000056">
    <property type="entry name" value="Acireductone dioxygenase"/>
    <property type="match status" value="1"/>
</dbReference>
<dbReference type="Gene3D" id="2.60.120.10">
    <property type="entry name" value="Jelly Rolls"/>
    <property type="match status" value="1"/>
</dbReference>
<dbReference type="HAMAP" id="MF_01682">
    <property type="entry name" value="Salvage_MtnD"/>
    <property type="match status" value="1"/>
</dbReference>
<dbReference type="InterPro" id="IPR004313">
    <property type="entry name" value="ARD"/>
</dbReference>
<dbReference type="InterPro" id="IPR023956">
    <property type="entry name" value="ARD_bac"/>
</dbReference>
<dbReference type="InterPro" id="IPR014710">
    <property type="entry name" value="RmlC-like_jellyroll"/>
</dbReference>
<dbReference type="InterPro" id="IPR011051">
    <property type="entry name" value="RmlC_Cupin_sf"/>
</dbReference>
<dbReference type="PANTHER" id="PTHR23418">
    <property type="entry name" value="ACIREDUCTONE DIOXYGENASE"/>
    <property type="match status" value="1"/>
</dbReference>
<dbReference type="PANTHER" id="PTHR23418:SF0">
    <property type="entry name" value="ACIREDUCTONE DIOXYGENASE"/>
    <property type="match status" value="1"/>
</dbReference>
<dbReference type="Pfam" id="PF03079">
    <property type="entry name" value="ARD"/>
    <property type="match status" value="1"/>
</dbReference>
<dbReference type="SUPFAM" id="SSF51182">
    <property type="entry name" value="RmlC-like cupins"/>
    <property type="match status" value="1"/>
</dbReference>
<name>MTND_PSEP7</name>
<sequence>MSSLTVYHESQPEQPLKLLTHAEDIASTLAEVGVRFERWEAAAPIAAGASQEEVIAAYAHEIERLKRERGYITVDVVSLDSDHPQKAELRAKFLDEHRHGEDEVRFFVAGRGLFVLHIEEHVYAVLCERNDLISVPAGTRHWFDMGEHPHFVAVRLFNNPEGWVAQFTGDDIASRFPLLED</sequence>
<evidence type="ECO:0000255" key="1">
    <source>
        <dbReference type="HAMAP-Rule" id="MF_01682"/>
    </source>
</evidence>
<proteinExistence type="inferred from homology"/>
<organism>
    <name type="scientific">Pseudomonas paraeruginosa (strain DSM 24068 / PA7)</name>
    <name type="common">Pseudomonas aeruginosa (strain PA7)</name>
    <dbReference type="NCBI Taxonomy" id="381754"/>
    <lineage>
        <taxon>Bacteria</taxon>
        <taxon>Pseudomonadati</taxon>
        <taxon>Pseudomonadota</taxon>
        <taxon>Gammaproteobacteria</taxon>
        <taxon>Pseudomonadales</taxon>
        <taxon>Pseudomonadaceae</taxon>
        <taxon>Pseudomonas</taxon>
        <taxon>Pseudomonas paraeruginosa</taxon>
    </lineage>
</organism>
<gene>
    <name evidence="1" type="primary">mtnD</name>
    <name type="ordered locus">PSPA7_3588</name>
</gene>
<accession>A6V7A7</accession>